<accession>Q06FX3</accession>
<comment type="function">
    <text evidence="1">Key component of the proton channel; it plays a direct role in the translocation of protons across the membrane.</text>
</comment>
<comment type="subunit">
    <text evidence="1">F-type ATPases have 2 components, CF(1) - the catalytic core - and CF(0) - the membrane proton channel. CF(1) has five subunits: alpha(3), beta(3), gamma(1), delta(1), epsilon(1). CF(0) has four main subunits: a, b, b' and c.</text>
</comment>
<comment type="subcellular location">
    <subcellularLocation>
        <location evidence="1">Plastid</location>
        <location evidence="1">Chloroplast thylakoid membrane</location>
        <topology evidence="1">Multi-pass membrane protein</topology>
    </subcellularLocation>
</comment>
<comment type="similarity">
    <text evidence="1">Belongs to the ATPase A chain family.</text>
</comment>
<proteinExistence type="inferred from homology"/>
<gene>
    <name evidence="1" type="primary">atpI</name>
</gene>
<geneLocation type="chloroplast"/>
<protein>
    <recommendedName>
        <fullName evidence="1">ATP synthase subunit a, chloroplastic</fullName>
    </recommendedName>
    <alternativeName>
        <fullName evidence="1">ATP synthase F0 sector subunit a</fullName>
    </alternativeName>
    <alternativeName>
        <fullName evidence="1">F-ATPase subunit IV</fullName>
    </alternativeName>
</protein>
<name>ATPI_PELHO</name>
<organism>
    <name type="scientific">Pelargonium hortorum</name>
    <name type="common">Common geranium</name>
    <name type="synonym">Pelargonium inquinans x Pelargonium zonale</name>
    <dbReference type="NCBI Taxonomy" id="4031"/>
    <lineage>
        <taxon>Eukaryota</taxon>
        <taxon>Viridiplantae</taxon>
        <taxon>Streptophyta</taxon>
        <taxon>Embryophyta</taxon>
        <taxon>Tracheophyta</taxon>
        <taxon>Spermatophyta</taxon>
        <taxon>Magnoliopsida</taxon>
        <taxon>eudicotyledons</taxon>
        <taxon>Gunneridae</taxon>
        <taxon>Pentapetalae</taxon>
        <taxon>rosids</taxon>
        <taxon>malvids</taxon>
        <taxon>Geraniales</taxon>
        <taxon>Geraniaceae</taxon>
        <taxon>Pelargonium</taxon>
    </lineage>
</organism>
<feature type="chain" id="PRO_0000362587" description="ATP synthase subunit a, chloroplastic">
    <location>
        <begin position="1"/>
        <end position="248"/>
    </location>
</feature>
<feature type="transmembrane region" description="Helical" evidence="1">
    <location>
        <begin position="39"/>
        <end position="59"/>
    </location>
</feature>
<feature type="transmembrane region" description="Helical" evidence="1">
    <location>
        <begin position="96"/>
        <end position="116"/>
    </location>
</feature>
<feature type="transmembrane region" description="Helical" evidence="1">
    <location>
        <begin position="135"/>
        <end position="155"/>
    </location>
</feature>
<feature type="transmembrane region" description="Helical" evidence="1">
    <location>
        <begin position="200"/>
        <end position="220"/>
    </location>
</feature>
<feature type="transmembrane region" description="Helical" evidence="1">
    <location>
        <begin position="221"/>
        <end position="241"/>
    </location>
</feature>
<sequence length="248" mass="27490">MNILSCSINTFKELLYDISGVEVGQHFYWQIGGFQVHGQVLITSWVVIAILLGSSILAVRNPQTIPTDVQNFFEYVLEFIRDVSKTQIGEEYGPWVPFIGTLFLFIFVSNWSGALFPWKIIQLPQGELAAPTNDINTTVALALLTSVAYFYAGLTKKGLAYFNKYIQPTPILLPINILEDFTKPLSLSFRLFGNILADELVVVVLLSLVPLVVPIPVMFLGLFTSGIQALIFATLAAAYIGESMEGHH</sequence>
<keyword id="KW-0066">ATP synthesis</keyword>
<keyword id="KW-0138">CF(0)</keyword>
<keyword id="KW-0150">Chloroplast</keyword>
<keyword id="KW-0375">Hydrogen ion transport</keyword>
<keyword id="KW-0406">Ion transport</keyword>
<keyword id="KW-0472">Membrane</keyword>
<keyword id="KW-0934">Plastid</keyword>
<keyword id="KW-0793">Thylakoid</keyword>
<keyword id="KW-0812">Transmembrane</keyword>
<keyword id="KW-1133">Transmembrane helix</keyword>
<keyword id="KW-0813">Transport</keyword>
<reference key="1">
    <citation type="journal article" date="2006" name="Mol. Biol. Evol.">
        <title>The complete chloroplast genome sequence of Pelargonium x hortorum: organization and evolution of the largest and most highly rearranged chloroplast genome of land plants.</title>
        <authorList>
            <person name="Chumley T.W."/>
            <person name="Palmer J.D."/>
            <person name="Mower J.P."/>
            <person name="Fourcade H.M."/>
            <person name="Calie P.J."/>
            <person name="Boore J.L."/>
            <person name="Jansen R.K."/>
        </authorList>
    </citation>
    <scope>NUCLEOTIDE SEQUENCE [LARGE SCALE GENOMIC DNA]</scope>
    <source>
        <strain>Ringo White</strain>
    </source>
</reference>
<dbReference type="EMBL" id="DQ897681">
    <property type="protein sequence ID" value="ABI17249.1"/>
    <property type="molecule type" value="Genomic_DNA"/>
</dbReference>
<dbReference type="RefSeq" id="YP_784058.1">
    <property type="nucleotide sequence ID" value="NC_008454.1"/>
</dbReference>
<dbReference type="SMR" id="Q06FX3"/>
<dbReference type="GeneID" id="4362768"/>
<dbReference type="GO" id="GO:0009535">
    <property type="term" value="C:chloroplast thylakoid membrane"/>
    <property type="evidence" value="ECO:0007669"/>
    <property type="project" value="UniProtKB-SubCell"/>
</dbReference>
<dbReference type="GO" id="GO:0005886">
    <property type="term" value="C:plasma membrane"/>
    <property type="evidence" value="ECO:0007669"/>
    <property type="project" value="UniProtKB-UniRule"/>
</dbReference>
<dbReference type="GO" id="GO:0045259">
    <property type="term" value="C:proton-transporting ATP synthase complex"/>
    <property type="evidence" value="ECO:0007669"/>
    <property type="project" value="UniProtKB-KW"/>
</dbReference>
<dbReference type="GO" id="GO:0046933">
    <property type="term" value="F:proton-transporting ATP synthase activity, rotational mechanism"/>
    <property type="evidence" value="ECO:0007669"/>
    <property type="project" value="UniProtKB-UniRule"/>
</dbReference>
<dbReference type="CDD" id="cd00310">
    <property type="entry name" value="ATP-synt_Fo_a_6"/>
    <property type="match status" value="1"/>
</dbReference>
<dbReference type="FunFam" id="1.20.120.220:FF:000001">
    <property type="entry name" value="ATP synthase subunit a, chloroplastic"/>
    <property type="match status" value="1"/>
</dbReference>
<dbReference type="Gene3D" id="1.20.120.220">
    <property type="entry name" value="ATP synthase, F0 complex, subunit A"/>
    <property type="match status" value="1"/>
</dbReference>
<dbReference type="HAMAP" id="MF_01393">
    <property type="entry name" value="ATP_synth_a_bact"/>
    <property type="match status" value="1"/>
</dbReference>
<dbReference type="InterPro" id="IPR045082">
    <property type="entry name" value="ATP_syn_F0_a_bact/chloroplast"/>
</dbReference>
<dbReference type="InterPro" id="IPR000568">
    <property type="entry name" value="ATP_synth_F0_asu"/>
</dbReference>
<dbReference type="InterPro" id="IPR023011">
    <property type="entry name" value="ATP_synth_F0_asu_AS"/>
</dbReference>
<dbReference type="InterPro" id="IPR035908">
    <property type="entry name" value="F0_ATP_A_sf"/>
</dbReference>
<dbReference type="NCBIfam" id="TIGR01131">
    <property type="entry name" value="ATP_synt_6_or_A"/>
    <property type="match status" value="1"/>
</dbReference>
<dbReference type="PANTHER" id="PTHR42823">
    <property type="entry name" value="ATP SYNTHASE SUBUNIT A, CHLOROPLASTIC"/>
    <property type="match status" value="1"/>
</dbReference>
<dbReference type="PANTHER" id="PTHR42823:SF3">
    <property type="entry name" value="ATP SYNTHASE SUBUNIT A, CHLOROPLASTIC"/>
    <property type="match status" value="1"/>
</dbReference>
<dbReference type="Pfam" id="PF00119">
    <property type="entry name" value="ATP-synt_A"/>
    <property type="match status" value="1"/>
</dbReference>
<dbReference type="PRINTS" id="PR00123">
    <property type="entry name" value="ATPASEA"/>
</dbReference>
<dbReference type="SUPFAM" id="SSF81336">
    <property type="entry name" value="F1F0 ATP synthase subunit A"/>
    <property type="match status" value="1"/>
</dbReference>
<dbReference type="PROSITE" id="PS00449">
    <property type="entry name" value="ATPASE_A"/>
    <property type="match status" value="1"/>
</dbReference>
<evidence type="ECO:0000255" key="1">
    <source>
        <dbReference type="HAMAP-Rule" id="MF_01393"/>
    </source>
</evidence>